<dbReference type="EC" id="1.6.1.1" evidence="1"/>
<dbReference type="EMBL" id="CP001063">
    <property type="protein sequence ID" value="ACD06316.1"/>
    <property type="molecule type" value="Genomic_DNA"/>
</dbReference>
<dbReference type="RefSeq" id="WP_001120824.1">
    <property type="nucleotide sequence ID" value="NC_010658.1"/>
</dbReference>
<dbReference type="SMR" id="B2TWF7"/>
<dbReference type="STRING" id="344609.SbBS512_E4447"/>
<dbReference type="KEGG" id="sbc:SbBS512_E4447"/>
<dbReference type="HOGENOM" id="CLU_016755_0_0_6"/>
<dbReference type="Proteomes" id="UP000001030">
    <property type="component" value="Chromosome"/>
</dbReference>
<dbReference type="GO" id="GO:0005829">
    <property type="term" value="C:cytosol"/>
    <property type="evidence" value="ECO:0007669"/>
    <property type="project" value="TreeGrafter"/>
</dbReference>
<dbReference type="GO" id="GO:0004148">
    <property type="term" value="F:dihydrolipoyl dehydrogenase (NADH) activity"/>
    <property type="evidence" value="ECO:0007669"/>
    <property type="project" value="TreeGrafter"/>
</dbReference>
<dbReference type="GO" id="GO:0050660">
    <property type="term" value="F:flavin adenine dinucleotide binding"/>
    <property type="evidence" value="ECO:0007669"/>
    <property type="project" value="TreeGrafter"/>
</dbReference>
<dbReference type="GO" id="GO:0003957">
    <property type="term" value="F:NAD(P)+ transhydrogenase (Si-specific) activity"/>
    <property type="evidence" value="ECO:0007669"/>
    <property type="project" value="UniProtKB-UniRule"/>
</dbReference>
<dbReference type="GO" id="GO:0006103">
    <property type="term" value="P:2-oxoglutarate metabolic process"/>
    <property type="evidence" value="ECO:0007669"/>
    <property type="project" value="TreeGrafter"/>
</dbReference>
<dbReference type="GO" id="GO:0006739">
    <property type="term" value="P:NADP metabolic process"/>
    <property type="evidence" value="ECO:0007669"/>
    <property type="project" value="UniProtKB-UniRule"/>
</dbReference>
<dbReference type="FunFam" id="3.30.390.30:FF:000002">
    <property type="entry name" value="Soluble pyridine nucleotide transhydrogenase"/>
    <property type="match status" value="1"/>
</dbReference>
<dbReference type="FunFam" id="3.50.50.60:FF:000008">
    <property type="entry name" value="Soluble pyridine nucleotide transhydrogenase"/>
    <property type="match status" value="1"/>
</dbReference>
<dbReference type="Gene3D" id="3.30.390.30">
    <property type="match status" value="1"/>
</dbReference>
<dbReference type="Gene3D" id="3.50.50.60">
    <property type="entry name" value="FAD/NAD(P)-binding domain"/>
    <property type="match status" value="2"/>
</dbReference>
<dbReference type="HAMAP" id="MF_00247">
    <property type="entry name" value="SthA"/>
    <property type="match status" value="1"/>
</dbReference>
<dbReference type="InterPro" id="IPR050151">
    <property type="entry name" value="Class-I_Pyr_Nuc-Dis_Oxidored"/>
</dbReference>
<dbReference type="InterPro" id="IPR036188">
    <property type="entry name" value="FAD/NAD-bd_sf"/>
</dbReference>
<dbReference type="InterPro" id="IPR023753">
    <property type="entry name" value="FAD/NAD-binding_dom"/>
</dbReference>
<dbReference type="InterPro" id="IPR016156">
    <property type="entry name" value="FAD/NAD-linked_Rdtase_dimer_sf"/>
</dbReference>
<dbReference type="InterPro" id="IPR001100">
    <property type="entry name" value="Pyr_nuc-diS_OxRdtase"/>
</dbReference>
<dbReference type="InterPro" id="IPR004099">
    <property type="entry name" value="Pyr_nucl-diS_OxRdtase_dimer"/>
</dbReference>
<dbReference type="InterPro" id="IPR022962">
    <property type="entry name" value="STH_gammaproteobact"/>
</dbReference>
<dbReference type="NCBIfam" id="NF003585">
    <property type="entry name" value="PRK05249.1"/>
    <property type="match status" value="1"/>
</dbReference>
<dbReference type="PANTHER" id="PTHR22912">
    <property type="entry name" value="DISULFIDE OXIDOREDUCTASE"/>
    <property type="match status" value="1"/>
</dbReference>
<dbReference type="PANTHER" id="PTHR22912:SF93">
    <property type="entry name" value="SOLUBLE PYRIDINE NUCLEOTIDE TRANSHYDROGENASE"/>
    <property type="match status" value="1"/>
</dbReference>
<dbReference type="Pfam" id="PF07992">
    <property type="entry name" value="Pyr_redox_2"/>
    <property type="match status" value="1"/>
</dbReference>
<dbReference type="Pfam" id="PF02852">
    <property type="entry name" value="Pyr_redox_dim"/>
    <property type="match status" value="1"/>
</dbReference>
<dbReference type="PIRSF" id="PIRSF000350">
    <property type="entry name" value="Mercury_reductase_MerA"/>
    <property type="match status" value="1"/>
</dbReference>
<dbReference type="PRINTS" id="PR00368">
    <property type="entry name" value="FADPNR"/>
</dbReference>
<dbReference type="PRINTS" id="PR00411">
    <property type="entry name" value="PNDRDTASEI"/>
</dbReference>
<dbReference type="SUPFAM" id="SSF51905">
    <property type="entry name" value="FAD/NAD(P)-binding domain"/>
    <property type="match status" value="1"/>
</dbReference>
<dbReference type="SUPFAM" id="SSF55424">
    <property type="entry name" value="FAD/NAD-linked reductases, dimerisation (C-terminal) domain"/>
    <property type="match status" value="1"/>
</dbReference>
<accession>B2TWF7</accession>
<sequence>MPHSYDYDAIVIGSGPGGEGAAMGLVKQGARVAVIERYQNVGGGCTHWGTIPSKALRHAVSRIIEFNQNPLYSDHSRLLRSSFADILNHADNVINQQTRMRQGFYERNHCEILQGNARFVDEHTLVLDCPDGSVETLTAEKFVIACGSRPYHPTDVDFTHPRIYDSDSILSMHHEPRHVLIYGAGVIGCEYASIFRGMDVKVDLINTRDRLLAFLDQEMSDSLSYHFWNSGVVIRHNEEYEKIEGCDDGVIMHLKSGKKLKADCLLYANGRTGNTDSLALQNIGLETDSRGQLKVNSMYQTAQPHVYAVGDVIGYPSLASAAYDQGRIAAQALVKGEATAHLIEDIPTGIYTIPEISSVGKTEQQLTAMKVPYEVGRAQFKHLARAQIVGMNVGTLKILFHRETKEILGIHCFGERAAEIIHIGQAIMEQKGGGNTIEYFVNTTFNYPTMAEAYRVAALNGLNRLF</sequence>
<feature type="chain" id="PRO_1000100862" description="Soluble pyridine nucleotide transhydrogenase">
    <location>
        <begin position="1"/>
        <end position="466"/>
    </location>
</feature>
<feature type="binding site" evidence="1">
    <location>
        <begin position="36"/>
        <end position="45"/>
    </location>
    <ligand>
        <name>FAD</name>
        <dbReference type="ChEBI" id="CHEBI:57692"/>
    </ligand>
</feature>
<gene>
    <name evidence="1" type="primary">sthA</name>
    <name evidence="1" type="synonym">udhA</name>
    <name type="ordered locus">SbBS512_E4447</name>
</gene>
<evidence type="ECO:0000255" key="1">
    <source>
        <dbReference type="HAMAP-Rule" id="MF_00247"/>
    </source>
</evidence>
<keyword id="KW-0963">Cytoplasm</keyword>
<keyword id="KW-0274">FAD</keyword>
<keyword id="KW-0285">Flavoprotein</keyword>
<keyword id="KW-0520">NAD</keyword>
<keyword id="KW-0521">NADP</keyword>
<keyword id="KW-0560">Oxidoreductase</keyword>
<keyword id="KW-1185">Reference proteome</keyword>
<proteinExistence type="inferred from homology"/>
<protein>
    <recommendedName>
        <fullName evidence="1">Soluble pyridine nucleotide transhydrogenase</fullName>
        <shortName evidence="1">STH</shortName>
        <ecNumber evidence="1">1.6.1.1</ecNumber>
    </recommendedName>
    <alternativeName>
        <fullName evidence="1">NAD(P)(+) transhydrogenase [B-specific]</fullName>
    </alternativeName>
</protein>
<comment type="function">
    <text evidence="1">Conversion of NADPH, generated by peripheral catabolic pathways, to NADH, which can enter the respiratory chain for energy generation.</text>
</comment>
<comment type="catalytic activity">
    <reaction evidence="1">
        <text>NAD(+) + NADPH = NADH + NADP(+)</text>
        <dbReference type="Rhea" id="RHEA:11692"/>
        <dbReference type="ChEBI" id="CHEBI:57540"/>
        <dbReference type="ChEBI" id="CHEBI:57783"/>
        <dbReference type="ChEBI" id="CHEBI:57945"/>
        <dbReference type="ChEBI" id="CHEBI:58349"/>
        <dbReference type="EC" id="1.6.1.1"/>
    </reaction>
</comment>
<comment type="cofactor">
    <cofactor evidence="1">
        <name>FAD</name>
        <dbReference type="ChEBI" id="CHEBI:57692"/>
    </cofactor>
    <text evidence="1">Binds 1 FAD per subunit.</text>
</comment>
<comment type="subcellular location">
    <subcellularLocation>
        <location evidence="1">Cytoplasm</location>
    </subcellularLocation>
</comment>
<comment type="similarity">
    <text evidence="1">Belongs to the class-I pyridine nucleotide-disulfide oxidoreductase family.</text>
</comment>
<reference key="1">
    <citation type="submission" date="2008-05" db="EMBL/GenBank/DDBJ databases">
        <title>Complete sequence of Shigella boydii serotype 18 strain BS512.</title>
        <authorList>
            <person name="Rasko D.A."/>
            <person name="Rosovitz M."/>
            <person name="Maurelli A.T."/>
            <person name="Myers G."/>
            <person name="Seshadri R."/>
            <person name="Cer R."/>
            <person name="Jiang L."/>
            <person name="Ravel J."/>
            <person name="Sebastian Y."/>
        </authorList>
    </citation>
    <scope>NUCLEOTIDE SEQUENCE [LARGE SCALE GENOMIC DNA]</scope>
    <source>
        <strain>CDC 3083-94 / BS512</strain>
    </source>
</reference>
<name>STHA_SHIB3</name>
<organism>
    <name type="scientific">Shigella boydii serotype 18 (strain CDC 3083-94 / BS512)</name>
    <dbReference type="NCBI Taxonomy" id="344609"/>
    <lineage>
        <taxon>Bacteria</taxon>
        <taxon>Pseudomonadati</taxon>
        <taxon>Pseudomonadota</taxon>
        <taxon>Gammaproteobacteria</taxon>
        <taxon>Enterobacterales</taxon>
        <taxon>Enterobacteriaceae</taxon>
        <taxon>Shigella</taxon>
    </lineage>
</organism>